<organism>
    <name type="scientific">Homo sapiens</name>
    <name type="common">Human</name>
    <dbReference type="NCBI Taxonomy" id="9606"/>
    <lineage>
        <taxon>Eukaryota</taxon>
        <taxon>Metazoa</taxon>
        <taxon>Chordata</taxon>
        <taxon>Craniata</taxon>
        <taxon>Vertebrata</taxon>
        <taxon>Euteleostomi</taxon>
        <taxon>Mammalia</taxon>
        <taxon>Eutheria</taxon>
        <taxon>Euarchontoglires</taxon>
        <taxon>Primates</taxon>
        <taxon>Haplorrhini</taxon>
        <taxon>Catarrhini</taxon>
        <taxon>Hominidae</taxon>
        <taxon>Homo</taxon>
    </lineage>
</organism>
<dbReference type="EMBL" id="AF152501">
    <property type="protein sequence ID" value="AAD43762.2"/>
    <property type="molecule type" value="mRNA"/>
</dbReference>
<dbReference type="EMBL" id="AC244517">
    <property type="status" value="NOT_ANNOTATED_CDS"/>
    <property type="molecule type" value="Genomic_DNA"/>
</dbReference>
<dbReference type="EMBL" id="BC136801">
    <property type="protein sequence ID" value="AAI36802.1"/>
    <property type="molecule type" value="mRNA"/>
</dbReference>
<dbReference type="EMBL" id="AF282973">
    <property type="protein sequence ID" value="AAG10031.1"/>
    <property type="molecule type" value="Genomic_DNA"/>
</dbReference>
<dbReference type="CCDS" id="CCDS4250.1"/>
<dbReference type="RefSeq" id="NP_061993.3">
    <property type="nucleotide sequence ID" value="NM_019120.5"/>
</dbReference>
<dbReference type="SMR" id="Q9UN66"/>
<dbReference type="BioGRID" id="121068">
    <property type="interactions" value="5"/>
</dbReference>
<dbReference type="FunCoup" id="Q9UN66">
    <property type="interactions" value="1"/>
</dbReference>
<dbReference type="IntAct" id="Q9UN66">
    <property type="interactions" value="2"/>
</dbReference>
<dbReference type="STRING" id="9606.ENSP00000239444"/>
<dbReference type="GlyConnect" id="1684">
    <property type="glycosylation" value="1 N-Linked glycan (1 site)"/>
</dbReference>
<dbReference type="GlyCosmos" id="Q9UN66">
    <property type="glycosylation" value="3 sites, 1 glycan"/>
</dbReference>
<dbReference type="GlyGen" id="Q9UN66">
    <property type="glycosylation" value="3 sites, 1 N-linked glycan (1 site)"/>
</dbReference>
<dbReference type="iPTMnet" id="Q9UN66"/>
<dbReference type="PhosphoSitePlus" id="Q9UN66"/>
<dbReference type="SwissPalm" id="Q9UN66"/>
<dbReference type="BioMuta" id="PCDHB8"/>
<dbReference type="DMDM" id="145559514"/>
<dbReference type="jPOST" id="Q9UN66"/>
<dbReference type="MassIVE" id="Q9UN66"/>
<dbReference type="PaxDb" id="9606-ENSP00000239444"/>
<dbReference type="PeptideAtlas" id="Q9UN66"/>
<dbReference type="ProteomicsDB" id="85251"/>
<dbReference type="Antibodypedia" id="72031">
    <property type="antibodies" value="29 antibodies from 7 providers"/>
</dbReference>
<dbReference type="DNASU" id="56128"/>
<dbReference type="Ensembl" id="ENST00000239444.4">
    <property type="protein sequence ID" value="ENSP00000239444.2"/>
    <property type="gene ID" value="ENSG00000120322.5"/>
</dbReference>
<dbReference type="Ensembl" id="ENST00000708365.1">
    <property type="protein sequence ID" value="ENSP00000517192.1"/>
    <property type="gene ID" value="ENSG00000291682.1"/>
</dbReference>
<dbReference type="GeneID" id="56128"/>
<dbReference type="KEGG" id="hsa:56128"/>
<dbReference type="MANE-Select" id="ENST00000239444.4">
    <property type="protein sequence ID" value="ENSP00000239444.2"/>
    <property type="RefSeq nucleotide sequence ID" value="NM_019120.5"/>
    <property type="RefSeq protein sequence ID" value="NP_061993.3"/>
</dbReference>
<dbReference type="UCSC" id="uc011dai.3">
    <property type="organism name" value="human"/>
</dbReference>
<dbReference type="AGR" id="HGNC:8693"/>
<dbReference type="CTD" id="56128"/>
<dbReference type="GeneCards" id="PCDHB8"/>
<dbReference type="HGNC" id="HGNC:8693">
    <property type="gene designation" value="PCDHB8"/>
</dbReference>
<dbReference type="HPA" id="ENSG00000120322">
    <property type="expression patterns" value="Low tissue specificity"/>
</dbReference>
<dbReference type="MIM" id="604967">
    <property type="type" value="gene"/>
</dbReference>
<dbReference type="MIM" id="606334">
    <property type="type" value="gene"/>
</dbReference>
<dbReference type="neXtProt" id="NX_Q9UN66"/>
<dbReference type="OpenTargets" id="ENSG00000120322"/>
<dbReference type="PharmGKB" id="PA33042"/>
<dbReference type="VEuPathDB" id="HostDB:ENSG00000120322"/>
<dbReference type="eggNOG" id="KOG3594">
    <property type="taxonomic scope" value="Eukaryota"/>
</dbReference>
<dbReference type="GeneTree" id="ENSGT00940000165899"/>
<dbReference type="HOGENOM" id="CLU_006480_3_0_1"/>
<dbReference type="InParanoid" id="Q9UN66"/>
<dbReference type="OMA" id="HSFGPEM"/>
<dbReference type="OrthoDB" id="9574at9604"/>
<dbReference type="PAN-GO" id="Q9UN66">
    <property type="GO annotations" value="2 GO annotations based on evolutionary models"/>
</dbReference>
<dbReference type="PhylomeDB" id="Q9UN66"/>
<dbReference type="TreeFam" id="TF332299"/>
<dbReference type="PathwayCommons" id="Q9UN66"/>
<dbReference type="BioGRID-ORCS" id="56128">
    <property type="hits" value="10 hits in 1075 CRISPR screens"/>
</dbReference>
<dbReference type="GenomeRNAi" id="56128"/>
<dbReference type="Pharos" id="Q9UN66">
    <property type="development level" value="Tdark"/>
</dbReference>
<dbReference type="PRO" id="PR:Q9UN66"/>
<dbReference type="Proteomes" id="UP000005640">
    <property type="component" value="Chromosome 5"/>
</dbReference>
<dbReference type="RNAct" id="Q9UN66">
    <property type="molecule type" value="protein"/>
</dbReference>
<dbReference type="Bgee" id="ENSG00000120322">
    <property type="expression patterns" value="Expressed in cortical plate and 90 other cell types or tissues"/>
</dbReference>
<dbReference type="GO" id="GO:0005886">
    <property type="term" value="C:plasma membrane"/>
    <property type="evidence" value="ECO:0000318"/>
    <property type="project" value="GO_Central"/>
</dbReference>
<dbReference type="GO" id="GO:0005509">
    <property type="term" value="F:calcium ion binding"/>
    <property type="evidence" value="ECO:0000250"/>
    <property type="project" value="UniProtKB"/>
</dbReference>
<dbReference type="GO" id="GO:0042802">
    <property type="term" value="F:identical protein binding"/>
    <property type="evidence" value="ECO:0000250"/>
    <property type="project" value="UniProtKB"/>
</dbReference>
<dbReference type="GO" id="GO:0007155">
    <property type="term" value="P:cell adhesion"/>
    <property type="evidence" value="ECO:0000318"/>
    <property type="project" value="GO_Central"/>
</dbReference>
<dbReference type="GO" id="GO:0007156">
    <property type="term" value="P:homophilic cell adhesion via plasma membrane adhesion molecules"/>
    <property type="evidence" value="ECO:0007669"/>
    <property type="project" value="InterPro"/>
</dbReference>
<dbReference type="GO" id="GO:0007399">
    <property type="term" value="P:nervous system development"/>
    <property type="evidence" value="ECO:0007669"/>
    <property type="project" value="UniProtKB-ARBA"/>
</dbReference>
<dbReference type="CDD" id="cd11304">
    <property type="entry name" value="Cadherin_repeat"/>
    <property type="match status" value="5"/>
</dbReference>
<dbReference type="FunFam" id="2.60.40.60:FF:000001">
    <property type="entry name" value="Protocadherin alpha 2"/>
    <property type="match status" value="1"/>
</dbReference>
<dbReference type="FunFam" id="2.60.40.60:FF:000002">
    <property type="entry name" value="Protocadherin alpha 2"/>
    <property type="match status" value="1"/>
</dbReference>
<dbReference type="FunFam" id="2.60.40.60:FF:000006">
    <property type="entry name" value="Protocadherin alpha 2"/>
    <property type="match status" value="1"/>
</dbReference>
<dbReference type="FunFam" id="2.60.40.60:FF:000046">
    <property type="entry name" value="Protocadherin beta 5"/>
    <property type="match status" value="1"/>
</dbReference>
<dbReference type="FunFam" id="2.60.40.60:FF:000309">
    <property type="entry name" value="Protocadherin beta-8"/>
    <property type="match status" value="1"/>
</dbReference>
<dbReference type="FunFam" id="2.60.40.60:FF:000018">
    <property type="entry name" value="Protocadherin gamma c3"/>
    <property type="match status" value="1"/>
</dbReference>
<dbReference type="Gene3D" id="2.60.40.60">
    <property type="entry name" value="Cadherins"/>
    <property type="match status" value="6"/>
</dbReference>
<dbReference type="InterPro" id="IPR002126">
    <property type="entry name" value="Cadherin-like_dom"/>
</dbReference>
<dbReference type="InterPro" id="IPR015919">
    <property type="entry name" value="Cadherin-like_sf"/>
</dbReference>
<dbReference type="InterPro" id="IPR032455">
    <property type="entry name" value="Cadherin_C"/>
</dbReference>
<dbReference type="InterPro" id="IPR020894">
    <property type="entry name" value="Cadherin_CS"/>
</dbReference>
<dbReference type="InterPro" id="IPR013164">
    <property type="entry name" value="Cadherin_N"/>
</dbReference>
<dbReference type="InterPro" id="IPR050174">
    <property type="entry name" value="Protocadherin/Cadherin-CA"/>
</dbReference>
<dbReference type="PANTHER" id="PTHR24028">
    <property type="entry name" value="CADHERIN-87A"/>
    <property type="match status" value="1"/>
</dbReference>
<dbReference type="PANTHER" id="PTHR24028:SF338">
    <property type="entry name" value="PROTOCADHERIN BETA-8"/>
    <property type="match status" value="1"/>
</dbReference>
<dbReference type="Pfam" id="PF00028">
    <property type="entry name" value="Cadherin"/>
    <property type="match status" value="5"/>
</dbReference>
<dbReference type="Pfam" id="PF08266">
    <property type="entry name" value="Cadherin_2"/>
    <property type="match status" value="1"/>
</dbReference>
<dbReference type="Pfam" id="PF16492">
    <property type="entry name" value="Cadherin_C_2"/>
    <property type="match status" value="1"/>
</dbReference>
<dbReference type="PRINTS" id="PR00205">
    <property type="entry name" value="CADHERIN"/>
</dbReference>
<dbReference type="SMART" id="SM00112">
    <property type="entry name" value="CA"/>
    <property type="match status" value="6"/>
</dbReference>
<dbReference type="SUPFAM" id="SSF49313">
    <property type="entry name" value="Cadherin-like"/>
    <property type="match status" value="5"/>
</dbReference>
<dbReference type="PROSITE" id="PS00232">
    <property type="entry name" value="CADHERIN_1"/>
    <property type="match status" value="5"/>
</dbReference>
<dbReference type="PROSITE" id="PS50268">
    <property type="entry name" value="CADHERIN_2"/>
    <property type="match status" value="5"/>
</dbReference>
<protein>
    <recommendedName>
        <fullName evidence="6">Protocadherin beta-8</fullName>
        <shortName evidence="6">PCDH-beta-8</shortName>
    </recommendedName>
    <alternativeName>
        <fullName>Protocadherin-3I</fullName>
    </alternativeName>
</protein>
<comment type="function">
    <text evidence="1">Calcium-dependent cell-adhesion protein involved in cells self-recognition and non-self discrimination. Thereby, it is involved in the establishment and maintenance of specific neuronal connections in the brain.</text>
</comment>
<comment type="subunit">
    <text evidence="1">Forms homodimers in trans (molecules expressed by two different cells). Forms promiscuous heterodimers in cis (at the plasma membrane of the same cell) with other protocadherins.</text>
</comment>
<comment type="subcellular location">
    <subcellularLocation>
        <location evidence="1">Cell membrane</location>
        <topology evidence="1">Single-pass type I membrane protein</topology>
    </subcellularLocation>
</comment>
<comment type="domain">
    <text evidence="1">Cadherin 1 to cadherin 4 domains mediate homophilic trans-interaction, the interaction with an identical protocadherin expressed by a neighboring cell. This is a head-to-tail interaction, the cadherin 1 domain interacting with the cadherin 4 domain and the cadherin 2 domain interacting the cadherin 3 domain of the other protocadherin. The cadherin 6 domain mediates promiscuous interactions with protocadherins on the same cell membrane. Each cadherin domain binds three calcium ions.</text>
</comment>
<keyword id="KW-0106">Calcium</keyword>
<keyword id="KW-0130">Cell adhesion</keyword>
<keyword id="KW-1003">Cell membrane</keyword>
<keyword id="KW-1015">Disulfide bond</keyword>
<keyword id="KW-0325">Glycoprotein</keyword>
<keyword id="KW-0472">Membrane</keyword>
<keyword id="KW-0479">Metal-binding</keyword>
<keyword id="KW-1267">Proteomics identification</keyword>
<keyword id="KW-1185">Reference proteome</keyword>
<keyword id="KW-0677">Repeat</keyword>
<keyword id="KW-0732">Signal</keyword>
<keyword id="KW-0812">Transmembrane</keyword>
<keyword id="KW-1133">Transmembrane helix</keyword>
<name>PCDB8_HUMAN</name>
<sequence>MEASGKLICRQRQVLFSFLLLGLSLAGAAEPRSYSVVEETEGSSFVTNLAKDLGLEQREFSRRGVRVVSRGNKLHLQLNQETADLLLNEKLDREDLCGHTEPCVLRFQVLLESPFEFFQAELQVIDINDHSPVFLDKQMLVKVSESSPPGTAFPLKNAEDLDIGQNNIENYIISPNSYFRVLTRKRSDGRKYPELVLDKALDREEEAELRLTLTALDGGSPPRSGTAQVYIEVVDVNDNAPEFEQPFYRVQISEDSPISFLVVKVSATDVDTGVNGEISYSLFQASDEISKTFKVDFLTGEIRLKKQLDFEKFQSYEVNIEARDAGGFSGKCTVLIQVIDVNDHAPEVTMSAFTSPIPENAPETVVALFSVSDLDSGENGKISCSIQEDLPFLLKSSVGNFYTLLTETPLDRESRAEYNVTITVTDLGTPRLTTHLNMTVLVSDVNDNAPAFTQTSYTLFVRENNSPALHIGSVSATDRDSGTNAQVTYSLLPPQDPHLPLASLVSINTDNGHLFALRSLDYEALQAFEFRVGASDRGSPALSSEALVRVLVLDANDNSPFVLYPLQNGSAPCTELVPRAAEPGYLVTKVVAVDGDSGQNAWLSYQLLKATEPGLFGVWAHNGEVRTARLLSERDAAKQRLVVLVKDNGEPPCSATATLHVLLVDGFSQPYLPLPEAAPAQGQADSLTVYLVVALASVSSLFLFSVLLFVAVLLCRRSRAASVGRCSVPEGPFPGHLVDVRGTGSLSQNYQYEVCLAGGSGTNEFQLLKPVLPNIQGHSFGPEMEQNSNFRNGFGFSLQLK</sequence>
<feature type="signal peptide" evidence="1">
    <location>
        <begin position="1"/>
        <end position="29"/>
    </location>
</feature>
<feature type="chain" id="PRO_0000003928" description="Protocadherin beta-8">
    <location>
        <begin position="30"/>
        <end position="801"/>
    </location>
</feature>
<feature type="topological domain" description="Extracellular" evidence="1">
    <location>
        <begin position="30"/>
        <end position="691"/>
    </location>
</feature>
<feature type="transmembrane region" description="Helical" evidence="2">
    <location>
        <begin position="692"/>
        <end position="710"/>
    </location>
</feature>
<feature type="topological domain" description="Cytoplasmic" evidence="1">
    <location>
        <begin position="711"/>
        <end position="801"/>
    </location>
</feature>
<feature type="domain" description="Cadherin 1" evidence="3">
    <location>
        <begin position="36"/>
        <end position="134"/>
    </location>
</feature>
<feature type="domain" description="Cadherin 2" evidence="3">
    <location>
        <begin position="139"/>
        <end position="243"/>
    </location>
</feature>
<feature type="domain" description="Cadherin 3" evidence="3">
    <location>
        <begin position="248"/>
        <end position="348"/>
    </location>
</feature>
<feature type="domain" description="Cadherin 4" evidence="3">
    <location>
        <begin position="353"/>
        <end position="452"/>
    </location>
</feature>
<feature type="domain" description="Cadherin 5" evidence="3">
    <location>
        <begin position="457"/>
        <end position="562"/>
    </location>
</feature>
<feature type="domain" description="Cadherin 6" evidence="3">
    <location>
        <begin position="569"/>
        <end position="672"/>
    </location>
</feature>
<feature type="glycosylation site" description="N-linked (GlcNAc...) asparagine" evidence="2">
    <location>
        <position position="419"/>
    </location>
</feature>
<feature type="glycosylation site" description="N-linked (GlcNAc...) asparagine" evidence="2">
    <location>
        <position position="437"/>
    </location>
</feature>
<feature type="glycosylation site" description="N-linked (GlcNAc...) asparagine" evidence="2">
    <location>
        <position position="568"/>
    </location>
</feature>
<feature type="disulfide bond" evidence="1">
    <location>
        <begin position="97"/>
        <end position="103"/>
    </location>
</feature>
<feature type="sequence variant" id="VAR_031619" description="In dbSNP:rs2950845." evidence="4">
    <original>K</original>
    <variation>N</variation>
    <location>
        <position position="199"/>
    </location>
</feature>
<feature type="sequence variant" id="VAR_055581" description="In dbSNP:rs17096954.">
    <original>E</original>
    <variation>G</variation>
    <location>
        <position position="232"/>
    </location>
</feature>
<feature type="sequence variant" id="VAR_031620" description="In dbSNP:rs2950844." evidence="4">
    <original>E</original>
    <variation>Q</variation>
    <location>
        <position position="244"/>
    </location>
</feature>
<feature type="sequence variant" id="VAR_021880" description="In dbSNP:rs3733694.">
    <original>K</original>
    <variation>E</variation>
    <location>
        <position position="305"/>
    </location>
</feature>
<feature type="sequence variant" id="VAR_024392" description="In dbSNP:rs7700833.">
    <original>A</original>
    <variation>V</variation>
    <location>
        <position position="322"/>
    </location>
</feature>
<feature type="sequence variant" id="VAR_055582" description="In dbSNP:rs3733693.">
    <original>I</original>
    <variation>T</variation>
    <location>
        <position position="382"/>
    </location>
</feature>
<feature type="sequence variant" id="VAR_055583" description="In dbSNP:rs2740582." evidence="5">
    <original>Q</original>
    <variation>H</variation>
    <location>
        <position position="639"/>
    </location>
</feature>
<feature type="sequence variant" id="VAR_055584" description="In dbSNP:rs2697541." evidence="4">
    <original>V</original>
    <variation>L</variation>
    <location>
        <position position="661"/>
    </location>
</feature>
<feature type="sequence variant" id="VAR_055585" description="In dbSNP:rs17096961.">
    <original>S</original>
    <variation>N</variation>
    <location>
        <position position="745"/>
    </location>
</feature>
<feature type="sequence variant" id="VAR_055586" description="In dbSNP:rs35245446.">
    <original>G</original>
    <variation>V</variation>
    <location>
        <position position="759"/>
    </location>
</feature>
<feature type="sequence variant" id="VAR_024393" description="In dbSNP:rs2740583." evidence="4">
    <original>L</original>
    <variation>F</variation>
    <location>
        <position position="767"/>
    </location>
</feature>
<feature type="sequence conflict" description="In Ref. 5; AAG10031." evidence="6" ref="5">
    <original>V</original>
    <variation>L</variation>
    <location>
        <position position="234"/>
    </location>
</feature>
<feature type="sequence conflict" description="In Ref. 5; AAG10031." evidence="6" ref="5">
    <original>G</original>
    <variation>S</variation>
    <location>
        <position position="569"/>
    </location>
</feature>
<accession>Q9UN66</accession>
<accession>B9EGV1</accession>
<evidence type="ECO:0000250" key="1">
    <source>
        <dbReference type="UniProtKB" id="Q91XZ2"/>
    </source>
</evidence>
<evidence type="ECO:0000255" key="2"/>
<evidence type="ECO:0000255" key="3">
    <source>
        <dbReference type="PROSITE-ProRule" id="PRU00043"/>
    </source>
</evidence>
<evidence type="ECO:0000269" key="4">
    <source>
    </source>
</evidence>
<evidence type="ECO:0000269" key="5">
    <source>
    </source>
</evidence>
<evidence type="ECO:0000305" key="6"/>
<evidence type="ECO:0000312" key="7">
    <source>
        <dbReference type="HGNC" id="HGNC:8693"/>
    </source>
</evidence>
<gene>
    <name evidence="7" type="primary">PCDHB8</name>
    <name type="synonym">PCDH3I</name>
</gene>
<proteinExistence type="evidence at protein level"/>
<reference key="1">
    <citation type="journal article" date="1999" name="Cell">
        <title>A striking organization of a large family of human neural cadherin-like cell adhesion genes.</title>
        <authorList>
            <person name="Wu Q."/>
            <person name="Maniatis T."/>
        </authorList>
    </citation>
    <scope>NUCLEOTIDE SEQUENCE [MRNA]</scope>
    <scope>VARIANTS ASN-199; GLN-244; LEU-661 AND PHE-767</scope>
</reference>
<reference key="2">
    <citation type="submission" date="2000-11" db="EMBL/GenBank/DDBJ databases">
        <authorList>
            <person name="Wu Q."/>
            <person name="Maniatis T."/>
        </authorList>
    </citation>
    <scope>SEQUENCE REVISION</scope>
</reference>
<reference key="3">
    <citation type="journal article" date="2004" name="Nature">
        <title>The DNA sequence and comparative analysis of human chromosome 5.</title>
        <authorList>
            <person name="Schmutz J."/>
            <person name="Martin J."/>
            <person name="Terry A."/>
            <person name="Couronne O."/>
            <person name="Grimwood J."/>
            <person name="Lowry S."/>
            <person name="Gordon L.A."/>
            <person name="Scott D."/>
            <person name="Xie G."/>
            <person name="Huang W."/>
            <person name="Hellsten U."/>
            <person name="Tran-Gyamfi M."/>
            <person name="She X."/>
            <person name="Prabhakar S."/>
            <person name="Aerts A."/>
            <person name="Altherr M."/>
            <person name="Bajorek E."/>
            <person name="Black S."/>
            <person name="Branscomb E."/>
            <person name="Caoile C."/>
            <person name="Challacombe J.F."/>
            <person name="Chan Y.M."/>
            <person name="Denys M."/>
            <person name="Detter J.C."/>
            <person name="Escobar J."/>
            <person name="Flowers D."/>
            <person name="Fotopulos D."/>
            <person name="Glavina T."/>
            <person name="Gomez M."/>
            <person name="Gonzales E."/>
            <person name="Goodstein D."/>
            <person name="Grigoriev I."/>
            <person name="Groza M."/>
            <person name="Hammon N."/>
            <person name="Hawkins T."/>
            <person name="Haydu L."/>
            <person name="Israni S."/>
            <person name="Jett J."/>
            <person name="Kadner K."/>
            <person name="Kimball H."/>
            <person name="Kobayashi A."/>
            <person name="Lopez F."/>
            <person name="Lou Y."/>
            <person name="Martinez D."/>
            <person name="Medina C."/>
            <person name="Morgan J."/>
            <person name="Nandkeshwar R."/>
            <person name="Noonan J.P."/>
            <person name="Pitluck S."/>
            <person name="Pollard M."/>
            <person name="Predki P."/>
            <person name="Priest J."/>
            <person name="Ramirez L."/>
            <person name="Retterer J."/>
            <person name="Rodriguez A."/>
            <person name="Rogers S."/>
            <person name="Salamov A."/>
            <person name="Salazar A."/>
            <person name="Thayer N."/>
            <person name="Tice H."/>
            <person name="Tsai M."/>
            <person name="Ustaszewska A."/>
            <person name="Vo N."/>
            <person name="Wheeler J."/>
            <person name="Wu K."/>
            <person name="Yang J."/>
            <person name="Dickson M."/>
            <person name="Cheng J.-F."/>
            <person name="Eichler E.E."/>
            <person name="Olsen A."/>
            <person name="Pennacchio L.A."/>
            <person name="Rokhsar D.S."/>
            <person name="Richardson P."/>
            <person name="Lucas S.M."/>
            <person name="Myers R.M."/>
            <person name="Rubin E.M."/>
        </authorList>
    </citation>
    <scope>NUCLEOTIDE SEQUENCE [LARGE SCALE GENOMIC DNA]</scope>
</reference>
<reference key="4">
    <citation type="journal article" date="2004" name="Genome Res.">
        <title>The status, quality, and expansion of the NIH full-length cDNA project: the Mammalian Gene Collection (MGC).</title>
        <authorList>
            <consortium name="The MGC Project Team"/>
        </authorList>
    </citation>
    <scope>NUCLEOTIDE SEQUENCE [LARGE SCALE MRNA]</scope>
    <source>
        <tissue>Testis</tissue>
    </source>
</reference>
<reference key="5">
    <citation type="journal article" date="2001" name="FEBS Lett.">
        <title>The human and murine protocadherin-beta one-exon gene families show high evolutionary conservation, despite the difference in gene number.</title>
        <authorList>
            <person name="Vanhalst K."/>
            <person name="Kools P."/>
            <person name="Vanden Eynde E."/>
            <person name="van Roy F."/>
        </authorList>
    </citation>
    <scope>NUCLEOTIDE SEQUENCE [GENOMIC DNA] OF 192-801</scope>
    <scope>VARIANT HIS-639</scope>
</reference>